<gene>
    <name type="primary">CYP73A12</name>
</gene>
<evidence type="ECO:0000250" key="1">
    <source>
        <dbReference type="UniProtKB" id="Q04468"/>
    </source>
</evidence>
<evidence type="ECO:0000250" key="2">
    <source>
        <dbReference type="UniProtKB" id="Q94IP1"/>
    </source>
</evidence>
<evidence type="ECO:0000255" key="3"/>
<evidence type="ECO:0000305" key="4"/>
<comment type="function">
    <text evidence="1">Catalyzes the first oxidative step of the phenylpropanoid pathway in higher plants by transforming trans-cinnamate into p-coumarate (By similarity). The compounds formed by this pathway are essential components for lignification, pollination, and defense against ultraviolet light, predators and pathogens (By similarity).</text>
</comment>
<comment type="catalytic activity">
    <reaction evidence="1">
        <text>(E)-cinnamate + reduced [NADPH--hemoprotein reductase] + O2 = (E)-4-coumarate + oxidized [NADPH--hemoprotein reductase] + H2O + H(+)</text>
        <dbReference type="Rhea" id="RHEA:10608"/>
        <dbReference type="Rhea" id="RHEA-COMP:11964"/>
        <dbReference type="Rhea" id="RHEA-COMP:11965"/>
        <dbReference type="ChEBI" id="CHEBI:12876"/>
        <dbReference type="ChEBI" id="CHEBI:15377"/>
        <dbReference type="ChEBI" id="CHEBI:15378"/>
        <dbReference type="ChEBI" id="CHEBI:15379"/>
        <dbReference type="ChEBI" id="CHEBI:15669"/>
        <dbReference type="ChEBI" id="CHEBI:57618"/>
        <dbReference type="ChEBI" id="CHEBI:58210"/>
        <dbReference type="EC" id="1.14.14.91"/>
    </reaction>
</comment>
<comment type="cofactor">
    <cofactor evidence="2">
        <name>heme</name>
        <dbReference type="ChEBI" id="CHEBI:30413"/>
    </cofactor>
</comment>
<comment type="pathway">
    <text evidence="4">Phenylpropanoid metabolism; trans-4-coumarate biosynthesis; trans-4-coumarate from trans-cinnamate: step 1/1.</text>
</comment>
<comment type="subcellular location">
    <subcellularLocation>
        <location evidence="3">Membrane</location>
        <topology evidence="3">Single-pass membrane protein</topology>
    </subcellularLocation>
</comment>
<comment type="similarity">
    <text evidence="4">Belongs to the cytochrome P450 family.</text>
</comment>
<name>TCMO_ZINEL</name>
<organism>
    <name type="scientific">Zinnia elegans</name>
    <name type="common">Garden zinnia</name>
    <name type="synonym">Zinnia violacea</name>
    <dbReference type="NCBI Taxonomy" id="34245"/>
    <lineage>
        <taxon>Eukaryota</taxon>
        <taxon>Viridiplantae</taxon>
        <taxon>Streptophyta</taxon>
        <taxon>Embryophyta</taxon>
        <taxon>Tracheophyta</taxon>
        <taxon>Spermatophyta</taxon>
        <taxon>Magnoliopsida</taxon>
        <taxon>eudicotyledons</taxon>
        <taxon>Gunneridae</taxon>
        <taxon>Pentapetalae</taxon>
        <taxon>asterids</taxon>
        <taxon>campanulids</taxon>
        <taxon>Asterales</taxon>
        <taxon>Asteraceae</taxon>
        <taxon>Asteroideae</taxon>
        <taxon>Heliantheae alliance</taxon>
        <taxon>Heliantheae</taxon>
        <taxon>Zinnia</taxon>
    </lineage>
</organism>
<dbReference type="EC" id="1.14.14.91" evidence="1"/>
<dbReference type="EMBL" id="U19922">
    <property type="protein sequence ID" value="AAB42024.1"/>
    <property type="molecule type" value="mRNA"/>
</dbReference>
<dbReference type="SMR" id="Q43240"/>
<dbReference type="UniPathway" id="UPA00825">
    <property type="reaction ID" value="UER00789"/>
</dbReference>
<dbReference type="GO" id="GO:0016020">
    <property type="term" value="C:membrane"/>
    <property type="evidence" value="ECO:0007669"/>
    <property type="project" value="UniProtKB-SubCell"/>
</dbReference>
<dbReference type="GO" id="GO:0020037">
    <property type="term" value="F:heme binding"/>
    <property type="evidence" value="ECO:0007669"/>
    <property type="project" value="InterPro"/>
</dbReference>
<dbReference type="GO" id="GO:0005506">
    <property type="term" value="F:iron ion binding"/>
    <property type="evidence" value="ECO:0007669"/>
    <property type="project" value="InterPro"/>
</dbReference>
<dbReference type="GO" id="GO:0016710">
    <property type="term" value="F:trans-cinnamate 4-monooxygenase activity"/>
    <property type="evidence" value="ECO:0007669"/>
    <property type="project" value="UniProtKB-EC"/>
</dbReference>
<dbReference type="GO" id="GO:0009058">
    <property type="term" value="P:biosynthetic process"/>
    <property type="evidence" value="ECO:0007669"/>
    <property type="project" value="UniProtKB-ARBA"/>
</dbReference>
<dbReference type="GO" id="GO:0009808">
    <property type="term" value="P:lignin metabolic process"/>
    <property type="evidence" value="ECO:0007669"/>
    <property type="project" value="TreeGrafter"/>
</dbReference>
<dbReference type="CDD" id="cd11074">
    <property type="entry name" value="CYP73"/>
    <property type="match status" value="1"/>
</dbReference>
<dbReference type="FunFam" id="1.10.630.10:FF:000013">
    <property type="entry name" value="Trans-cinnamate 4-monooxygenase"/>
    <property type="match status" value="1"/>
</dbReference>
<dbReference type="Gene3D" id="1.10.630.10">
    <property type="entry name" value="Cytochrome P450"/>
    <property type="match status" value="1"/>
</dbReference>
<dbReference type="InterPro" id="IPR001128">
    <property type="entry name" value="Cyt_P450"/>
</dbReference>
<dbReference type="InterPro" id="IPR017972">
    <property type="entry name" value="Cyt_P450_CS"/>
</dbReference>
<dbReference type="InterPro" id="IPR002401">
    <property type="entry name" value="Cyt_P450_E_grp-I"/>
</dbReference>
<dbReference type="InterPro" id="IPR036396">
    <property type="entry name" value="Cyt_P450_sf"/>
</dbReference>
<dbReference type="PANTHER" id="PTHR47948">
    <property type="entry name" value="TRANS-CINNAMATE 4-MONOOXYGENASE"/>
    <property type="match status" value="1"/>
</dbReference>
<dbReference type="PANTHER" id="PTHR47948:SF4">
    <property type="entry name" value="TRANS-CINNAMATE 4-MONOOXYGENASE"/>
    <property type="match status" value="1"/>
</dbReference>
<dbReference type="Pfam" id="PF00067">
    <property type="entry name" value="p450"/>
    <property type="match status" value="1"/>
</dbReference>
<dbReference type="PRINTS" id="PR00463">
    <property type="entry name" value="EP450I"/>
</dbReference>
<dbReference type="PRINTS" id="PR00385">
    <property type="entry name" value="P450"/>
</dbReference>
<dbReference type="SUPFAM" id="SSF48264">
    <property type="entry name" value="Cytochrome P450"/>
    <property type="match status" value="1"/>
</dbReference>
<dbReference type="PROSITE" id="PS00086">
    <property type="entry name" value="CYTOCHROME_P450"/>
    <property type="match status" value="1"/>
</dbReference>
<accession>Q43240</accession>
<sequence length="505" mass="57914">MDLLLVEKTLLALFAAIIASIFISKLRGKRFKLPPGPVPVPIFGNWLQVGDDLNHRNLTDLAKKFGEIFLLRMGQRNLVVVSSPNLAKEVLHTQGVEFGSRTRNVVFDIFTGKGQDMVFTVYGEHWRKMRRIMTVPFFTNKVVQQYRTGWEAEAAAVVDDVKKNPKAATEGVVIRKRLQLMMYNNMFRIMFDRRFESEDDPLFVKLKMLNGERSRLAQSFEYNYGDFIPILRPFLKGYLKLCKEVKEKRFQLFKDYFVDERKKLGSTKSMDNNQLKCAIDHILDAKDKGEINEDNVLYIVENINVAAIETTLWSIEWAIAELVNHPEIQAKLRHELVSQLGPGVQVTEPDLHKLPYLQAVIKETLRLRMAIPLLVPHMNLHDAKLGGYDIPAESKILVNAWWLANNPDQWKKPEEFRPERFLEEESKVEANGNDFRYLPFGVGRRSCPGIILALPILGITIGRLVQNFELLPPPGQDKVDTTEKGGQFSLHILKHSTIVAKPRVL</sequence>
<proteinExistence type="evidence at transcript level"/>
<feature type="chain" id="PRO_0000052255" description="Trans-cinnamate 4-monooxygenase">
    <location>
        <begin position="1"/>
        <end position="505"/>
    </location>
</feature>
<feature type="transmembrane region" description="Helical" evidence="3">
    <location>
        <begin position="3"/>
        <end position="23"/>
    </location>
</feature>
<feature type="binding site" evidence="2">
    <location>
        <begin position="213"/>
        <end position="218"/>
    </location>
    <ligand>
        <name>(E)-cinnamate</name>
        <dbReference type="ChEBI" id="CHEBI:15669"/>
    </ligand>
</feature>
<feature type="binding site" evidence="2">
    <location>
        <position position="306"/>
    </location>
    <ligand>
        <name>(E)-cinnamate</name>
        <dbReference type="ChEBI" id="CHEBI:15669"/>
    </ligand>
</feature>
<feature type="binding site" description="axial binding residue" evidence="2">
    <location>
        <position position="447"/>
    </location>
    <ligand>
        <name>heme</name>
        <dbReference type="ChEBI" id="CHEBI:30413"/>
    </ligand>
    <ligandPart>
        <name>Fe</name>
        <dbReference type="ChEBI" id="CHEBI:18248"/>
    </ligandPart>
</feature>
<protein>
    <recommendedName>
        <fullName>Trans-cinnamate 4-monooxygenase</fullName>
        <ecNumber evidence="1">1.14.14.91</ecNumber>
    </recommendedName>
    <alternativeName>
        <fullName>Cinnamic acid 4-hydroxylase</fullName>
        <shortName>C4H</shortName>
        <shortName>CA4H</shortName>
    </alternativeName>
    <alternativeName>
        <fullName>Cytochrome P450 73</fullName>
    </alternativeName>
    <alternativeName>
        <fullName>Cytochrome P450C4H</fullName>
    </alternativeName>
</protein>
<reference key="1">
    <citation type="journal article" date="1996" name="Plant Sci.">
        <title>Expression patterns of cinnamic acid 4-hydroxylase gene during lignification in Zinnia elegans.</title>
        <authorList>
            <person name="Ye Z.-H."/>
            <person name="Varner J.E."/>
        </authorList>
    </citation>
    <scope>NUCLEOTIDE SEQUENCE [MRNA]</scope>
    <source>
        <strain>cv. Peter Pan</strain>
    </source>
</reference>
<keyword id="KW-0349">Heme</keyword>
<keyword id="KW-0408">Iron</keyword>
<keyword id="KW-0472">Membrane</keyword>
<keyword id="KW-0479">Metal-binding</keyword>
<keyword id="KW-0503">Monooxygenase</keyword>
<keyword id="KW-0560">Oxidoreductase</keyword>
<keyword id="KW-0812">Transmembrane</keyword>
<keyword id="KW-1133">Transmembrane helix</keyword>